<accession>Q4L5Q4</accession>
<gene>
    <name evidence="1" type="primary">carA</name>
    <name type="ordered locus">SH1712</name>
</gene>
<name>CARA_STAHJ</name>
<dbReference type="EC" id="6.3.5.5" evidence="1"/>
<dbReference type="EMBL" id="AP006716">
    <property type="protein sequence ID" value="BAE05021.1"/>
    <property type="molecule type" value="Genomic_DNA"/>
</dbReference>
<dbReference type="RefSeq" id="WP_011275997.1">
    <property type="nucleotide sequence ID" value="NC_007168.1"/>
</dbReference>
<dbReference type="SMR" id="Q4L5Q4"/>
<dbReference type="MEROPS" id="C26.963"/>
<dbReference type="KEGG" id="sha:SH1712"/>
<dbReference type="eggNOG" id="COG0505">
    <property type="taxonomic scope" value="Bacteria"/>
</dbReference>
<dbReference type="HOGENOM" id="CLU_035901_2_1_9"/>
<dbReference type="OrthoDB" id="9804328at2"/>
<dbReference type="UniPathway" id="UPA00068">
    <property type="reaction ID" value="UER00171"/>
</dbReference>
<dbReference type="UniPathway" id="UPA00070">
    <property type="reaction ID" value="UER00115"/>
</dbReference>
<dbReference type="Proteomes" id="UP000000543">
    <property type="component" value="Chromosome"/>
</dbReference>
<dbReference type="GO" id="GO:0005524">
    <property type="term" value="F:ATP binding"/>
    <property type="evidence" value="ECO:0007669"/>
    <property type="project" value="UniProtKB-UniRule"/>
</dbReference>
<dbReference type="GO" id="GO:0004088">
    <property type="term" value="F:carbamoyl-phosphate synthase (glutamine-hydrolyzing) activity"/>
    <property type="evidence" value="ECO:0007669"/>
    <property type="project" value="UniProtKB-UniRule"/>
</dbReference>
<dbReference type="GO" id="GO:0004359">
    <property type="term" value="F:glutaminase activity"/>
    <property type="evidence" value="ECO:0007669"/>
    <property type="project" value="RHEA"/>
</dbReference>
<dbReference type="GO" id="GO:0006207">
    <property type="term" value="P:'de novo' pyrimidine nucleobase biosynthetic process"/>
    <property type="evidence" value="ECO:0007669"/>
    <property type="project" value="InterPro"/>
</dbReference>
<dbReference type="GO" id="GO:0044205">
    <property type="term" value="P:'de novo' UMP biosynthetic process"/>
    <property type="evidence" value="ECO:0007669"/>
    <property type="project" value="UniProtKB-UniRule"/>
</dbReference>
<dbReference type="GO" id="GO:0006541">
    <property type="term" value="P:glutamine metabolic process"/>
    <property type="evidence" value="ECO:0007669"/>
    <property type="project" value="InterPro"/>
</dbReference>
<dbReference type="GO" id="GO:0006526">
    <property type="term" value="P:L-arginine biosynthetic process"/>
    <property type="evidence" value="ECO:0007669"/>
    <property type="project" value="UniProtKB-UniRule"/>
</dbReference>
<dbReference type="CDD" id="cd01744">
    <property type="entry name" value="GATase1_CPSase"/>
    <property type="match status" value="1"/>
</dbReference>
<dbReference type="FunFam" id="3.40.50.880:FF:000029">
    <property type="entry name" value="Carbamoyl-phosphate synthase small chain"/>
    <property type="match status" value="1"/>
</dbReference>
<dbReference type="FunFam" id="3.50.30.20:FF:000001">
    <property type="entry name" value="Carbamoyl-phosphate synthase small chain"/>
    <property type="match status" value="1"/>
</dbReference>
<dbReference type="Gene3D" id="3.40.50.880">
    <property type="match status" value="1"/>
</dbReference>
<dbReference type="Gene3D" id="3.50.30.20">
    <property type="entry name" value="Carbamoyl-phosphate synthase small subunit, N-terminal domain"/>
    <property type="match status" value="1"/>
</dbReference>
<dbReference type="HAMAP" id="MF_01209">
    <property type="entry name" value="CPSase_S_chain"/>
    <property type="match status" value="1"/>
</dbReference>
<dbReference type="InterPro" id="IPR050472">
    <property type="entry name" value="Anth_synth/Amidotransfase"/>
</dbReference>
<dbReference type="InterPro" id="IPR006274">
    <property type="entry name" value="CarbamoylP_synth_ssu"/>
</dbReference>
<dbReference type="InterPro" id="IPR002474">
    <property type="entry name" value="CarbamoylP_synth_ssu_N"/>
</dbReference>
<dbReference type="InterPro" id="IPR036480">
    <property type="entry name" value="CarbP_synth_ssu_N_sf"/>
</dbReference>
<dbReference type="InterPro" id="IPR029062">
    <property type="entry name" value="Class_I_gatase-like"/>
</dbReference>
<dbReference type="InterPro" id="IPR035686">
    <property type="entry name" value="CPSase_GATase1"/>
</dbReference>
<dbReference type="InterPro" id="IPR017926">
    <property type="entry name" value="GATASE"/>
</dbReference>
<dbReference type="NCBIfam" id="TIGR01368">
    <property type="entry name" value="CPSaseIIsmall"/>
    <property type="match status" value="1"/>
</dbReference>
<dbReference type="NCBIfam" id="NF009475">
    <property type="entry name" value="PRK12838.1"/>
    <property type="match status" value="1"/>
</dbReference>
<dbReference type="PANTHER" id="PTHR43418:SF7">
    <property type="entry name" value="CARBAMOYL-PHOSPHATE SYNTHASE SMALL CHAIN"/>
    <property type="match status" value="1"/>
</dbReference>
<dbReference type="PANTHER" id="PTHR43418">
    <property type="entry name" value="MULTIFUNCTIONAL TRYPTOPHAN BIOSYNTHESIS PROTEIN-RELATED"/>
    <property type="match status" value="1"/>
</dbReference>
<dbReference type="Pfam" id="PF00988">
    <property type="entry name" value="CPSase_sm_chain"/>
    <property type="match status" value="1"/>
</dbReference>
<dbReference type="Pfam" id="PF00117">
    <property type="entry name" value="GATase"/>
    <property type="match status" value="1"/>
</dbReference>
<dbReference type="PRINTS" id="PR00097">
    <property type="entry name" value="ANTSNTHASEII"/>
</dbReference>
<dbReference type="PRINTS" id="PR00099">
    <property type="entry name" value="CPSGATASE"/>
</dbReference>
<dbReference type="PRINTS" id="PR00096">
    <property type="entry name" value="GATASE"/>
</dbReference>
<dbReference type="SMART" id="SM01097">
    <property type="entry name" value="CPSase_sm_chain"/>
    <property type="match status" value="1"/>
</dbReference>
<dbReference type="SUPFAM" id="SSF52021">
    <property type="entry name" value="Carbamoyl phosphate synthetase, small subunit N-terminal domain"/>
    <property type="match status" value="1"/>
</dbReference>
<dbReference type="SUPFAM" id="SSF52317">
    <property type="entry name" value="Class I glutamine amidotransferase-like"/>
    <property type="match status" value="1"/>
</dbReference>
<dbReference type="PROSITE" id="PS51273">
    <property type="entry name" value="GATASE_TYPE_1"/>
    <property type="match status" value="1"/>
</dbReference>
<feature type="chain" id="PRO_0000112323" description="Carbamoyl phosphate synthase small chain">
    <location>
        <begin position="1"/>
        <end position="366"/>
    </location>
</feature>
<feature type="domain" description="Glutamine amidotransferase type-1" evidence="1">
    <location>
        <begin position="173"/>
        <end position="360"/>
    </location>
</feature>
<feature type="region of interest" description="CPSase" evidence="1">
    <location>
        <begin position="1"/>
        <end position="171"/>
    </location>
</feature>
<feature type="active site" description="Nucleophile" evidence="1">
    <location>
        <position position="248"/>
    </location>
</feature>
<feature type="active site" evidence="1">
    <location>
        <position position="333"/>
    </location>
</feature>
<feature type="active site" evidence="1">
    <location>
        <position position="335"/>
    </location>
</feature>
<feature type="binding site" evidence="1">
    <location>
        <position position="47"/>
    </location>
    <ligand>
        <name>L-glutamine</name>
        <dbReference type="ChEBI" id="CHEBI:58359"/>
    </ligand>
</feature>
<feature type="binding site" evidence="1">
    <location>
        <position position="221"/>
    </location>
    <ligand>
        <name>L-glutamine</name>
        <dbReference type="ChEBI" id="CHEBI:58359"/>
    </ligand>
</feature>
<feature type="binding site" evidence="1">
    <location>
        <position position="223"/>
    </location>
    <ligand>
        <name>L-glutamine</name>
        <dbReference type="ChEBI" id="CHEBI:58359"/>
    </ligand>
</feature>
<feature type="binding site" evidence="1">
    <location>
        <position position="249"/>
    </location>
    <ligand>
        <name>L-glutamine</name>
        <dbReference type="ChEBI" id="CHEBI:58359"/>
    </ligand>
</feature>
<feature type="binding site" evidence="1">
    <location>
        <position position="252"/>
    </location>
    <ligand>
        <name>L-glutamine</name>
        <dbReference type="ChEBI" id="CHEBI:58359"/>
    </ligand>
</feature>
<feature type="binding site" evidence="1">
    <location>
        <position position="290"/>
    </location>
    <ligand>
        <name>L-glutamine</name>
        <dbReference type="ChEBI" id="CHEBI:58359"/>
    </ligand>
</feature>
<feature type="binding site" evidence="1">
    <location>
        <position position="292"/>
    </location>
    <ligand>
        <name>L-glutamine</name>
        <dbReference type="ChEBI" id="CHEBI:58359"/>
    </ligand>
</feature>
<feature type="binding site" evidence="1">
    <location>
        <position position="293"/>
    </location>
    <ligand>
        <name>L-glutamine</name>
        <dbReference type="ChEBI" id="CHEBI:58359"/>
    </ligand>
</feature>
<comment type="function">
    <text evidence="1">Small subunit of the glutamine-dependent carbamoyl phosphate synthetase (CPSase). CPSase catalyzes the formation of carbamoyl phosphate from the ammonia moiety of glutamine, carbonate, and phosphate donated by ATP, constituting the first step of 2 biosynthetic pathways, one leading to arginine and/or urea and the other to pyrimidine nucleotides. The small subunit (glutamine amidotransferase) binds and cleaves glutamine to supply the large subunit with the substrate ammonia.</text>
</comment>
<comment type="catalytic activity">
    <reaction evidence="1">
        <text>hydrogencarbonate + L-glutamine + 2 ATP + H2O = carbamoyl phosphate + L-glutamate + 2 ADP + phosphate + 2 H(+)</text>
        <dbReference type="Rhea" id="RHEA:18633"/>
        <dbReference type="ChEBI" id="CHEBI:15377"/>
        <dbReference type="ChEBI" id="CHEBI:15378"/>
        <dbReference type="ChEBI" id="CHEBI:17544"/>
        <dbReference type="ChEBI" id="CHEBI:29985"/>
        <dbReference type="ChEBI" id="CHEBI:30616"/>
        <dbReference type="ChEBI" id="CHEBI:43474"/>
        <dbReference type="ChEBI" id="CHEBI:58228"/>
        <dbReference type="ChEBI" id="CHEBI:58359"/>
        <dbReference type="ChEBI" id="CHEBI:456216"/>
        <dbReference type="EC" id="6.3.5.5"/>
    </reaction>
</comment>
<comment type="catalytic activity">
    <molecule>Carbamoyl phosphate synthase small chain</molecule>
    <reaction evidence="1">
        <text>L-glutamine + H2O = L-glutamate + NH4(+)</text>
        <dbReference type="Rhea" id="RHEA:15889"/>
        <dbReference type="ChEBI" id="CHEBI:15377"/>
        <dbReference type="ChEBI" id="CHEBI:28938"/>
        <dbReference type="ChEBI" id="CHEBI:29985"/>
        <dbReference type="ChEBI" id="CHEBI:58359"/>
    </reaction>
</comment>
<comment type="pathway">
    <text evidence="1">Amino-acid biosynthesis; L-arginine biosynthesis; carbamoyl phosphate from bicarbonate: step 1/1.</text>
</comment>
<comment type="pathway">
    <text evidence="1">Pyrimidine metabolism; UMP biosynthesis via de novo pathway; (S)-dihydroorotate from bicarbonate: step 1/3.</text>
</comment>
<comment type="subunit">
    <text evidence="1">Composed of two chains; the small (or glutamine) chain promotes the hydrolysis of glutamine to ammonia, which is used by the large (or ammonia) chain to synthesize carbamoyl phosphate. Tetramer of heterodimers (alpha,beta)4.</text>
</comment>
<comment type="similarity">
    <text evidence="1">Belongs to the CarA family.</text>
</comment>
<keyword id="KW-0028">Amino-acid biosynthesis</keyword>
<keyword id="KW-0055">Arginine biosynthesis</keyword>
<keyword id="KW-0067">ATP-binding</keyword>
<keyword id="KW-0315">Glutamine amidotransferase</keyword>
<keyword id="KW-0436">Ligase</keyword>
<keyword id="KW-0547">Nucleotide-binding</keyword>
<keyword id="KW-0665">Pyrimidine biosynthesis</keyword>
<organism>
    <name type="scientific">Staphylococcus haemolyticus (strain JCSC1435)</name>
    <dbReference type="NCBI Taxonomy" id="279808"/>
    <lineage>
        <taxon>Bacteria</taxon>
        <taxon>Bacillati</taxon>
        <taxon>Bacillota</taxon>
        <taxon>Bacilli</taxon>
        <taxon>Bacillales</taxon>
        <taxon>Staphylococcaceae</taxon>
        <taxon>Staphylococcus</taxon>
    </lineage>
</organism>
<sequence length="366" mass="40482">MLERRYLVLEDGTYYEGYKLGSNDLSVGEIVFNTAMTGYQETISDPSYTGQIITFTYPLIGNYGINRDDFEALTPTLNGVVVKEASTHPSNFRNQKTLHDVLVQYKIPGISGVDTRSITRKIRQHGVLKAGFTDNRDDIDSLINTLKSTELPRDEVETVSTKTPYVSTGSDLSVVLLDFGKKQNIVRELNMRGCNVTVVPYNTTAEEILAMSPDGVMLSNGPGDPDVVEVAIEMIKGILGKIPFFGICLGHQLFALSQGGTSFKMKFGHRGANHPVKDLRSGKVDITSQNHGYAIDKNSLVNTDLEVTHIALNDGTVEGLRHKTLPAFSVQYHPEARPGPSDSNYLFDEFMTMMKEFKEKEQTANA</sequence>
<proteinExistence type="inferred from homology"/>
<reference key="1">
    <citation type="journal article" date="2005" name="J. Bacteriol.">
        <title>Whole-genome sequencing of Staphylococcus haemolyticus uncovers the extreme plasticity of its genome and the evolution of human-colonizing staphylococcal species.</title>
        <authorList>
            <person name="Takeuchi F."/>
            <person name="Watanabe S."/>
            <person name="Baba T."/>
            <person name="Yuzawa H."/>
            <person name="Ito T."/>
            <person name="Morimoto Y."/>
            <person name="Kuroda M."/>
            <person name="Cui L."/>
            <person name="Takahashi M."/>
            <person name="Ankai A."/>
            <person name="Baba S."/>
            <person name="Fukui S."/>
            <person name="Lee J.C."/>
            <person name="Hiramatsu K."/>
        </authorList>
    </citation>
    <scope>NUCLEOTIDE SEQUENCE [LARGE SCALE GENOMIC DNA]</scope>
    <source>
        <strain>JCSC1435</strain>
    </source>
</reference>
<evidence type="ECO:0000255" key="1">
    <source>
        <dbReference type="HAMAP-Rule" id="MF_01209"/>
    </source>
</evidence>
<protein>
    <recommendedName>
        <fullName evidence="1">Carbamoyl phosphate synthase small chain</fullName>
        <ecNumber evidence="1">6.3.5.5</ecNumber>
    </recommendedName>
    <alternativeName>
        <fullName evidence="1">Carbamoyl phosphate synthetase glutamine chain</fullName>
    </alternativeName>
</protein>